<name>RL16_VIBA3</name>
<keyword id="KW-0687">Ribonucleoprotein</keyword>
<keyword id="KW-0689">Ribosomal protein</keyword>
<keyword id="KW-0694">RNA-binding</keyword>
<keyword id="KW-0699">rRNA-binding</keyword>
<keyword id="KW-0820">tRNA-binding</keyword>
<comment type="function">
    <text evidence="1">Binds 23S rRNA and is also seen to make contacts with the A and possibly P site tRNAs.</text>
</comment>
<comment type="subunit">
    <text evidence="1">Part of the 50S ribosomal subunit.</text>
</comment>
<comment type="similarity">
    <text evidence="1">Belongs to the universal ribosomal protein uL16 family.</text>
</comment>
<organism>
    <name type="scientific">Vibrio atlanticus (strain LGP32)</name>
    <name type="common">Vibrio splendidus (strain Mel32)</name>
    <dbReference type="NCBI Taxonomy" id="575788"/>
    <lineage>
        <taxon>Bacteria</taxon>
        <taxon>Pseudomonadati</taxon>
        <taxon>Pseudomonadota</taxon>
        <taxon>Gammaproteobacteria</taxon>
        <taxon>Vibrionales</taxon>
        <taxon>Vibrionaceae</taxon>
        <taxon>Vibrio</taxon>
    </lineage>
</organism>
<accession>B7VLF0</accession>
<evidence type="ECO:0000255" key="1">
    <source>
        <dbReference type="HAMAP-Rule" id="MF_01342"/>
    </source>
</evidence>
<evidence type="ECO:0000305" key="2"/>
<dbReference type="EMBL" id="FM954972">
    <property type="protein sequence ID" value="CAV20117.1"/>
    <property type="molecule type" value="Genomic_DNA"/>
</dbReference>
<dbReference type="SMR" id="B7VLF0"/>
<dbReference type="STRING" id="575788.VS_2824"/>
<dbReference type="KEGG" id="vsp:VS_2824"/>
<dbReference type="PATRIC" id="fig|575788.5.peg.4036"/>
<dbReference type="eggNOG" id="COG0197">
    <property type="taxonomic scope" value="Bacteria"/>
</dbReference>
<dbReference type="HOGENOM" id="CLU_078858_2_1_6"/>
<dbReference type="Proteomes" id="UP000009100">
    <property type="component" value="Chromosome 1"/>
</dbReference>
<dbReference type="GO" id="GO:0022625">
    <property type="term" value="C:cytosolic large ribosomal subunit"/>
    <property type="evidence" value="ECO:0007669"/>
    <property type="project" value="TreeGrafter"/>
</dbReference>
<dbReference type="GO" id="GO:0019843">
    <property type="term" value="F:rRNA binding"/>
    <property type="evidence" value="ECO:0007669"/>
    <property type="project" value="UniProtKB-UniRule"/>
</dbReference>
<dbReference type="GO" id="GO:0003735">
    <property type="term" value="F:structural constituent of ribosome"/>
    <property type="evidence" value="ECO:0007669"/>
    <property type="project" value="InterPro"/>
</dbReference>
<dbReference type="GO" id="GO:0000049">
    <property type="term" value="F:tRNA binding"/>
    <property type="evidence" value="ECO:0007669"/>
    <property type="project" value="UniProtKB-KW"/>
</dbReference>
<dbReference type="GO" id="GO:0006412">
    <property type="term" value="P:translation"/>
    <property type="evidence" value="ECO:0007669"/>
    <property type="project" value="UniProtKB-UniRule"/>
</dbReference>
<dbReference type="CDD" id="cd01433">
    <property type="entry name" value="Ribosomal_L16_L10e"/>
    <property type="match status" value="1"/>
</dbReference>
<dbReference type="FunFam" id="3.90.1170.10:FF:000001">
    <property type="entry name" value="50S ribosomal protein L16"/>
    <property type="match status" value="1"/>
</dbReference>
<dbReference type="Gene3D" id="3.90.1170.10">
    <property type="entry name" value="Ribosomal protein L10e/L16"/>
    <property type="match status" value="1"/>
</dbReference>
<dbReference type="HAMAP" id="MF_01342">
    <property type="entry name" value="Ribosomal_uL16"/>
    <property type="match status" value="1"/>
</dbReference>
<dbReference type="InterPro" id="IPR047873">
    <property type="entry name" value="Ribosomal_uL16"/>
</dbReference>
<dbReference type="InterPro" id="IPR000114">
    <property type="entry name" value="Ribosomal_uL16_bact-type"/>
</dbReference>
<dbReference type="InterPro" id="IPR016180">
    <property type="entry name" value="Ribosomal_uL16_dom"/>
</dbReference>
<dbReference type="InterPro" id="IPR036920">
    <property type="entry name" value="Ribosomal_uL16_sf"/>
</dbReference>
<dbReference type="NCBIfam" id="TIGR01164">
    <property type="entry name" value="rplP_bact"/>
    <property type="match status" value="1"/>
</dbReference>
<dbReference type="PANTHER" id="PTHR12220">
    <property type="entry name" value="50S/60S RIBOSOMAL PROTEIN L16"/>
    <property type="match status" value="1"/>
</dbReference>
<dbReference type="PANTHER" id="PTHR12220:SF13">
    <property type="entry name" value="LARGE RIBOSOMAL SUBUNIT PROTEIN UL16M"/>
    <property type="match status" value="1"/>
</dbReference>
<dbReference type="Pfam" id="PF00252">
    <property type="entry name" value="Ribosomal_L16"/>
    <property type="match status" value="1"/>
</dbReference>
<dbReference type="PRINTS" id="PR00060">
    <property type="entry name" value="RIBOSOMALL16"/>
</dbReference>
<dbReference type="SUPFAM" id="SSF54686">
    <property type="entry name" value="Ribosomal protein L16p/L10e"/>
    <property type="match status" value="1"/>
</dbReference>
<protein>
    <recommendedName>
        <fullName evidence="1">Large ribosomal subunit protein uL16</fullName>
    </recommendedName>
    <alternativeName>
        <fullName evidence="2">50S ribosomal protein L16</fullName>
    </alternativeName>
</protein>
<proteinExistence type="inferred from homology"/>
<gene>
    <name evidence="1" type="primary">rplP</name>
    <name type="ordered locus">VS_2824</name>
</gene>
<sequence>MLQPKRTKFRKVMTGRNRGLAKGTEVSFGEFGLKAVGRGRLTARQIEAARRAMTRHIKRQGQIWIRVIPDKPSVQKPLEVRQGKGKGSAVYWVAQIQPGKVMYEMNGVPEELAREAFRLAARKLPVKTTFVTKQVM</sequence>
<reference key="1">
    <citation type="submission" date="2009-02" db="EMBL/GenBank/DDBJ databases">
        <title>Vibrio splendidus str. LGP32 complete genome.</title>
        <authorList>
            <person name="Mazel D."/>
            <person name="Le Roux F."/>
        </authorList>
    </citation>
    <scope>NUCLEOTIDE SEQUENCE [LARGE SCALE GENOMIC DNA]</scope>
    <source>
        <strain>LGP32</strain>
    </source>
</reference>
<feature type="chain" id="PRO_1000166390" description="Large ribosomal subunit protein uL16">
    <location>
        <begin position="1"/>
        <end position="136"/>
    </location>
</feature>